<protein>
    <recommendedName>
        <fullName>DNA terminal protein</fullName>
    </recommendedName>
    <alternativeName>
        <fullName>Gene product 3</fullName>
        <shortName>gp3</shortName>
    </alternativeName>
    <alternativeName>
        <fullName>Protein p3</fullName>
    </alternativeName>
</protein>
<organismHost>
    <name type="scientific">Bacillus subtilis</name>
    <dbReference type="NCBI Taxonomy" id="1423"/>
</organismHost>
<comment type="function">
    <text evidence="1">Acts as a primer for DNA elongation during viral genomic replication. Acts as the small terminase protein during packaging. Recruits the phage DNA polymerase to the bacterial nucleoid. Primer terminal protein (TP) is covalently linked to the 5'-ends of both strands of the genome through a phosphodiester bond between the beta-hydroxyl group of a serine residue and the 5'-phosphate of the terminal deoxyadenylate (dAMP). To start replication, the DNA polymerase forms a heterodimer with a free TP that recognizes the replication origins at both 5' ends of the linear chromosome, and initiates replication using as primer the OH-group of Ser-232 of the TP. Since the polymerase initiates the replication on the second thymine, the TP-dAMP initiation product slides backwards to recover the template information of the first nucleotide.</text>
</comment>
<comment type="function">
    <text evidence="1">Hydrolyzes host peptidoglycans during virus entry.</text>
</comment>
<comment type="subunit">
    <text evidence="1">Interacts with the viral polymerase; this interaction allows the initiation of TP-primed DNA replication at both viral DNA ends. Binds to ssDNA. Interacts with the replication protein p1. Part of a DNA-gp3-gp16 complex.</text>
</comment>
<comment type="subcellular location">
    <subcellularLocation>
        <location evidence="1">Virion</location>
    </subcellularLocation>
    <text evidence="1">Associates with the host bacterial nucleoid through its N-terminal region.</text>
</comment>
<comment type="similarity">
    <text evidence="2">Belongs to the phi29likevirus DNA terminal protein family.</text>
</comment>
<accession>P06951</accession>
<proteinExistence type="inferred from homology"/>
<sequence length="266" mass="31067">MARSPRIRIKDNDKAEYARLVKNTKAKIARTKKKYGVDLSAEINIPDLESFETRAQFNKWKEQASSFTNRANMRYQFEKNAYGVVASKAKIAEIERNTKEVQRLVDEKINAMKDKEYYAGGKPQGTIEQRIAMTSPAHVTGINRPRDFDFSKVRTYSRLRTLEESMEMRTDPQYYEKKMIQLQLNFIKSVEGSFNSFDAADELIEELKKIPPDDFYELFLRISEISFEEFDSEGNTVENVEGNVYKILSYLEQYRRGDFDLSLKGF</sequence>
<gene>
    <name type="primary">3</name>
</gene>
<organism>
    <name type="scientific">Bacillus phage PZA</name>
    <name type="common">Bacteriophage PZA</name>
    <dbReference type="NCBI Taxonomy" id="10757"/>
    <lineage>
        <taxon>Viruses</taxon>
        <taxon>Duplodnaviria</taxon>
        <taxon>Heunggongvirae</taxon>
        <taxon>Uroviricota</taxon>
        <taxon>Caudoviricetes</taxon>
        <taxon>Salasmaviridae</taxon>
        <taxon>Picovirinae</taxon>
        <taxon>Salasvirus</taxon>
        <taxon>Salasvirus PZA</taxon>
    </lineage>
</organism>
<evidence type="ECO:0000250" key="1">
    <source>
        <dbReference type="UniProtKB" id="P03681"/>
    </source>
</evidence>
<evidence type="ECO:0000305" key="2"/>
<keyword id="KW-0190">Covalent protein-DNA linkage</keyword>
<keyword id="KW-1235">Degradation of host cell envelope components during virus entry</keyword>
<keyword id="KW-1236">Degradation of host peptidoglycans during virus entry</keyword>
<keyword id="KW-0235">DNA replication</keyword>
<keyword id="KW-0244">Early protein</keyword>
<keyword id="KW-0378">Hydrolase</keyword>
<keyword id="KW-0597">Phosphoprotein</keyword>
<keyword id="KW-1194">Viral DNA replication</keyword>
<keyword id="KW-0946">Virion</keyword>
<keyword id="KW-1160">Virus entry into host cell</keyword>
<name>TERM_BPPZA</name>
<feature type="chain" id="PRO_0000106557" description="DNA terminal protein">
    <location>
        <begin position="1"/>
        <end position="266"/>
    </location>
</feature>
<feature type="region of interest" description="Disordered" evidence="1">
    <location>
        <begin position="1"/>
        <end position="73"/>
    </location>
</feature>
<feature type="region of interest" description="Intermediate; makes extensive contacts with the phage DNA polymerase" evidence="1">
    <location>
        <begin position="74"/>
        <end position="172"/>
    </location>
</feature>
<feature type="region of interest" description="Priming" evidence="1">
    <location>
        <begin position="173"/>
        <end position="266"/>
    </location>
</feature>
<feature type="region of interest" description="Interaction with the viral DNA polymerase" evidence="1">
    <location>
        <begin position="256"/>
        <end position="258"/>
    </location>
</feature>
<feature type="site" description="Positions the 3' end of the template strand at the active site of the DNA polymerase" evidence="1">
    <location>
        <position position="230"/>
    </location>
</feature>
<feature type="modified residue" description="O-(5'-phospho-DNA)-serine" evidence="1">
    <location>
        <position position="232"/>
    </location>
</feature>
<dbReference type="EMBL" id="M11813">
    <property type="protein sequence ID" value="AAA88477.1"/>
    <property type="molecule type" value="Genomic_DNA"/>
</dbReference>
<dbReference type="PIR" id="E24528">
    <property type="entry name" value="ERBP3Z"/>
</dbReference>
<dbReference type="SMR" id="P06951"/>
<dbReference type="Proteomes" id="UP000000855">
    <property type="component" value="Segment"/>
</dbReference>
<dbReference type="GO" id="GO:0044423">
    <property type="term" value="C:virion component"/>
    <property type="evidence" value="ECO:0007669"/>
    <property type="project" value="UniProtKB-KW"/>
</dbReference>
<dbReference type="GO" id="GO:0016787">
    <property type="term" value="F:hydrolase activity"/>
    <property type="evidence" value="ECO:0007669"/>
    <property type="project" value="UniProtKB-KW"/>
</dbReference>
<dbReference type="GO" id="GO:0006269">
    <property type="term" value="P:DNA replication, synthesis of primer"/>
    <property type="evidence" value="ECO:0007669"/>
    <property type="project" value="InterPro"/>
</dbReference>
<dbReference type="GO" id="GO:0098994">
    <property type="term" value="P:symbiont entry into host cell via disruption of host cell envelope"/>
    <property type="evidence" value="ECO:0007669"/>
    <property type="project" value="UniProtKB-KW"/>
</dbReference>
<dbReference type="GO" id="GO:0098932">
    <property type="term" value="P:symbiont entry into host cell via disruption of host cell wall peptidoglycan"/>
    <property type="evidence" value="ECO:0007669"/>
    <property type="project" value="UniProtKB-KW"/>
</dbReference>
<dbReference type="GO" id="GO:0039693">
    <property type="term" value="P:viral DNA genome replication"/>
    <property type="evidence" value="ECO:0007669"/>
    <property type="project" value="UniProtKB-KW"/>
</dbReference>
<dbReference type="Gene3D" id="6.10.250.960">
    <property type="match status" value="1"/>
</dbReference>
<dbReference type="Gene3D" id="1.20.1270.230">
    <property type="entry name" value="DNA terminal protein Gp3, priming domain"/>
    <property type="match status" value="1"/>
</dbReference>
<dbReference type="InterPro" id="IPR008770">
    <property type="entry name" value="DNA_terminal_Gp3"/>
</dbReference>
<dbReference type="InterPro" id="IPR043124">
    <property type="entry name" value="DNA_terminal_Gp3_C"/>
</dbReference>
<dbReference type="InterPro" id="IPR037216">
    <property type="entry name" value="DNA_terminal_Gp3_sf"/>
</dbReference>
<dbReference type="Pfam" id="PF05435">
    <property type="entry name" value="Phi-29_GP3"/>
    <property type="match status" value="1"/>
</dbReference>
<dbReference type="PIRSF" id="PIRSF004179">
    <property type="entry name" value="Phi-29_GP3"/>
    <property type="match status" value="1"/>
</dbReference>
<dbReference type="SUPFAM" id="SSF140919">
    <property type="entry name" value="DNA terminal protein"/>
    <property type="match status" value="1"/>
</dbReference>
<reference key="1">
    <citation type="journal article" date="1985" name="Gene">
        <title>Nucleotide sequence of the major early region of Bacillus subtilis phage PZA, a close relative of phi 29.</title>
        <authorList>
            <person name="Paces V."/>
            <person name="Vlcek C."/>
            <person name="Urbanek P."/>
            <person name="Hostomsky Z."/>
        </authorList>
    </citation>
    <scope>NUCLEOTIDE SEQUENCE [GENOMIC DNA]</scope>
</reference>